<comment type="function">
    <text evidence="3">Tachykinins are active peptides which excite neurons, evoke behavioral responses, are potent vasodilators and secretagogues, and contract (directly or indirectly) many smooth muscles.</text>
</comment>
<comment type="subcellular location">
    <subcellularLocation>
        <location evidence="5">Secreted</location>
    </subcellularLocation>
</comment>
<comment type="tissue specificity">
    <text evidence="3">Expressed in the posterior salivary gland and more specifically in the mucus-secreting gland cells.</text>
</comment>
<comment type="similarity">
    <text evidence="3">Belongs to the tachykinin family.</text>
</comment>
<protein>
    <recommendedName>
        <fullName>Tachykinin-2</fullName>
    </recommendedName>
    <alternativeName>
        <fullName>OctTK-II</fullName>
    </alternativeName>
    <alternativeName>
        <fullName>Tachykinin II</fullName>
    </alternativeName>
</protein>
<organism>
    <name type="scientific">Octopus vulgaris</name>
    <name type="common">Common octopus</name>
    <dbReference type="NCBI Taxonomy" id="6645"/>
    <lineage>
        <taxon>Eukaryota</taxon>
        <taxon>Metazoa</taxon>
        <taxon>Spiralia</taxon>
        <taxon>Lophotrochozoa</taxon>
        <taxon>Mollusca</taxon>
        <taxon>Cephalopoda</taxon>
        <taxon>Coleoidea</taxon>
        <taxon>Octopodiformes</taxon>
        <taxon>Octopoda</taxon>
        <taxon>Incirrata</taxon>
        <taxon>Octopodidae</taxon>
        <taxon>Octopus</taxon>
    </lineage>
</organism>
<feature type="signal peptide" evidence="1 4">
    <location>
        <begin position="1"/>
        <end position="22"/>
    </location>
</feature>
<feature type="propeptide" id="PRO_0000033519" evidence="3">
    <location>
        <begin position="23"/>
        <end position="37"/>
    </location>
</feature>
<feature type="peptide" id="PRO_0000033520" description="Tachykinin-2">
    <location>
        <begin position="38"/>
        <end position="49"/>
    </location>
</feature>
<feature type="propeptide" id="PRO_0000033521" evidence="3">
    <location>
        <begin position="52"/>
        <end position="92"/>
    </location>
</feature>
<feature type="region of interest" description="Disordered" evidence="2">
    <location>
        <begin position="61"/>
        <end position="92"/>
    </location>
</feature>
<feature type="modified residue" description="Methionine amide" evidence="3">
    <location>
        <position position="49"/>
    </location>
</feature>
<evidence type="ECO:0000255" key="1"/>
<evidence type="ECO:0000256" key="2">
    <source>
        <dbReference type="SAM" id="MobiDB-lite"/>
    </source>
</evidence>
<evidence type="ECO:0000269" key="3">
    <source>
    </source>
</evidence>
<evidence type="ECO:0000303" key="4">
    <source>
    </source>
</evidence>
<evidence type="ECO:0000305" key="5"/>
<evidence type="ECO:0000312" key="6">
    <source>
        <dbReference type="EMBL" id="BAC53871.1"/>
    </source>
</evidence>
<name>TKN2_OCTVU</name>
<dbReference type="EMBL" id="AB085917">
    <property type="protein sequence ID" value="BAC53871.1"/>
    <property type="molecule type" value="mRNA"/>
</dbReference>
<dbReference type="Proteomes" id="UP000515154">
    <property type="component" value="Unplaced"/>
</dbReference>
<dbReference type="GO" id="GO:0005576">
    <property type="term" value="C:extracellular region"/>
    <property type="evidence" value="ECO:0007669"/>
    <property type="project" value="UniProtKB-SubCell"/>
</dbReference>
<dbReference type="GO" id="GO:0007218">
    <property type="term" value="P:neuropeptide signaling pathway"/>
    <property type="evidence" value="ECO:0007669"/>
    <property type="project" value="UniProtKB-KW"/>
</dbReference>
<dbReference type="InterPro" id="IPR013055">
    <property type="entry name" value="Tachy_Neuro_lke_CS"/>
</dbReference>
<dbReference type="PROSITE" id="PS00267">
    <property type="entry name" value="TACHYKININ"/>
    <property type="match status" value="1"/>
</dbReference>
<keyword id="KW-0027">Amidation</keyword>
<keyword id="KW-0903">Direct protein sequencing</keyword>
<keyword id="KW-0527">Neuropeptide</keyword>
<keyword id="KW-1185">Reference proteome</keyword>
<keyword id="KW-0964">Secreted</keyword>
<keyword id="KW-0732">Signal</keyword>
<proteinExistence type="evidence at protein level"/>
<sequence>MIRVGLILCCIFIVGVFEASSADDILTAHNLIKRSEVKPPSSSEFVGLMGRSEELTRRLIQHPGSMSETSKRGPPKKGDFNPNELKPESNIC</sequence>
<reference evidence="5 6" key="1">
    <citation type="journal article" date="2003" name="Peptides">
        <title>Isolation and characterization of novel tachykinins from the posterior salivary gland of the common octopus Octopus vulgaris.</title>
        <authorList>
            <person name="Kanda A."/>
            <person name="Iwakoshi-Ukena E."/>
            <person name="Takuwa-Kuroda K."/>
            <person name="Minakata H."/>
        </authorList>
    </citation>
    <scope>NUCLEOTIDE SEQUENCE [MRNA]</scope>
    <scope>PROTEIN SEQUENCE OF 38-49</scope>
    <scope>FUNCTION</scope>
    <scope>TISSUE SPECIFICITY</scope>
    <scope>AMIDATION AT MET-49</scope>
    <source>
        <tissue>Posterior salivary gland</tissue>
    </source>
</reference>
<accession>Q8I6S2</accession>